<organism>
    <name type="scientific">Renibacterium salmoninarum (strain ATCC 33209 / DSM 20767 / JCM 11484 / NBRC 15589 / NCIMB 2235)</name>
    <dbReference type="NCBI Taxonomy" id="288705"/>
    <lineage>
        <taxon>Bacteria</taxon>
        <taxon>Bacillati</taxon>
        <taxon>Actinomycetota</taxon>
        <taxon>Actinomycetes</taxon>
        <taxon>Micrococcales</taxon>
        <taxon>Micrococcaceae</taxon>
        <taxon>Renibacterium</taxon>
    </lineage>
</organism>
<name>NB_RENSM</name>
<keyword id="KW-0349">Heme</keyword>
<keyword id="KW-0408">Iron</keyword>
<keyword id="KW-0413">Isomerase</keyword>
<keyword id="KW-0479">Metal-binding</keyword>
<keyword id="KW-1185">Reference proteome</keyword>
<evidence type="ECO:0000255" key="1">
    <source>
        <dbReference type="HAMAP-Rule" id="MF_01297"/>
    </source>
</evidence>
<evidence type="ECO:0000305" key="2"/>
<protein>
    <recommendedName>
        <fullName>Peroxynitrite isomerase</fullName>
        <ecNumber evidence="1">5.99.-.-</ecNumber>
    </recommendedName>
    <alternativeName>
        <fullName>Ferric nitrobindin</fullName>
        <shortName>Nb(III)</shortName>
    </alternativeName>
</protein>
<feature type="chain" id="PRO_0000356945" description="Peroxynitrite isomerase">
    <location>
        <begin position="1"/>
        <end position="210"/>
    </location>
</feature>
<feature type="short sequence motif" description="GXWXGXG" evidence="1">
    <location>
        <begin position="21"/>
        <end position="27"/>
    </location>
</feature>
<feature type="binding site" description="axial binding residue" evidence="1">
    <location>
        <position position="190"/>
    </location>
    <ligand>
        <name>heme b</name>
        <dbReference type="ChEBI" id="CHEBI:60344"/>
    </ligand>
    <ligandPart>
        <name>Fe</name>
        <dbReference type="ChEBI" id="CHEBI:18248"/>
    </ligandPart>
</feature>
<accession>A9WNI9</accession>
<reference key="1">
    <citation type="journal article" date="2008" name="J. Bacteriol.">
        <title>Genome sequence of the fish pathogen Renibacterium salmoninarum suggests reductive evolution away from an environmental Arthrobacter ancestor.</title>
        <authorList>
            <person name="Wiens G.D."/>
            <person name="Rockey D.D."/>
            <person name="Wu Z."/>
            <person name="Chang J."/>
            <person name="Levy R."/>
            <person name="Crane S."/>
            <person name="Chen D.S."/>
            <person name="Capri G.R."/>
            <person name="Burnett J.R."/>
            <person name="Sudheesh P.S."/>
            <person name="Schipma M.J."/>
            <person name="Burd H."/>
            <person name="Bhattacharyya A."/>
            <person name="Rhodes L.D."/>
            <person name="Kaul R."/>
            <person name="Strom M.S."/>
        </authorList>
    </citation>
    <scope>NUCLEOTIDE SEQUENCE [LARGE SCALE GENOMIC DNA]</scope>
    <source>
        <strain>ATCC 33209 / DSM 20767 / JCM 11484 / NBRC 15589 / NCIMB 2235</strain>
    </source>
</reference>
<proteinExistence type="inferred from homology"/>
<comment type="function">
    <text evidence="1">Heme-binding protein able to scavenge peroxynitrite and to protect free L-tyrosine against peroxynitrite-mediated nitration, by acting as a peroxynitrite isomerase that converts peroxynitrite to nitrate. Therefore, this protein likely plays a role in peroxynitrite sensing and in the detoxification of reactive nitrogen and oxygen species (RNS and ROS, respectively). Is able to bind nitric oxide (NO) in vitro, but may act as a sensor of peroxynitrite levels in vivo.</text>
</comment>
<comment type="catalytic activity">
    <reaction evidence="1">
        <text>peroxynitrite = nitrate</text>
        <dbReference type="Rhea" id="RHEA:63116"/>
        <dbReference type="ChEBI" id="CHEBI:17632"/>
        <dbReference type="ChEBI" id="CHEBI:25941"/>
    </reaction>
    <physiologicalReaction direction="left-to-right" evidence="1">
        <dbReference type="Rhea" id="RHEA:63117"/>
    </physiologicalReaction>
</comment>
<comment type="cofactor">
    <cofactor evidence="1">
        <name>heme b</name>
        <dbReference type="ChEBI" id="CHEBI:60344"/>
    </cofactor>
    <text evidence="1">Binds 1 heme b group per subunit, that coordinates a highly solvent-exposed Fe(III) atom.</text>
</comment>
<comment type="pathway">
    <text evidence="1">Nitrogen metabolism.</text>
</comment>
<comment type="subunit">
    <text evidence="1">Homodimer.</text>
</comment>
<comment type="domain">
    <text evidence="1">Forms a 10-stranded antiparallel beta-barrel structure able to accommodate a hydrophobic ligand in its interior. In fact, this fold hosts the heme group, which is located in a wide surface cleft.</text>
</comment>
<comment type="similarity">
    <text evidence="1">Belongs to the nitrobindin family.</text>
</comment>
<comment type="sequence caution" evidence="2">
    <conflict type="erroneous initiation">
        <sequence resource="EMBL-CDS" id="ABY22711"/>
    </conflict>
</comment>
<sequence length="210" mass="22808">MPVEIPRDLTPELVPLSWLLGQWEGQGRLGTGEAESEHFFQRVTFSSNGLPYLEYVAESWLTDEEGMKLRPLSVEMGFWALDRKLGEADGGPGLIPADIVPALTTADDVEKLRNDTSGFDITATIVHPGGISELYYGTIKGPQIELSTDAVMRGAGAKDYSAATRIFGLVNGDLFWRWDVAAEGNSLEAHASAILKKTAAPESAEQRPSE</sequence>
<dbReference type="EC" id="5.99.-.-" evidence="1"/>
<dbReference type="EMBL" id="CP000910">
    <property type="protein sequence ID" value="ABY22711.1"/>
    <property type="status" value="ALT_INIT"/>
    <property type="molecule type" value="Genomic_DNA"/>
</dbReference>
<dbReference type="RefSeq" id="WP_041684426.1">
    <property type="nucleotide sequence ID" value="NC_010168.1"/>
</dbReference>
<dbReference type="SMR" id="A9WNI9"/>
<dbReference type="STRING" id="288705.RSal33209_0970"/>
<dbReference type="KEGG" id="rsa:RSal33209_0970"/>
<dbReference type="eggNOG" id="COG3485">
    <property type="taxonomic scope" value="Bacteria"/>
</dbReference>
<dbReference type="HOGENOM" id="CLU_085483_0_1_11"/>
<dbReference type="Proteomes" id="UP000002007">
    <property type="component" value="Chromosome"/>
</dbReference>
<dbReference type="GO" id="GO:0020037">
    <property type="term" value="F:heme binding"/>
    <property type="evidence" value="ECO:0007669"/>
    <property type="project" value="UniProtKB-UniRule"/>
</dbReference>
<dbReference type="GO" id="GO:0046872">
    <property type="term" value="F:metal ion binding"/>
    <property type="evidence" value="ECO:0007669"/>
    <property type="project" value="UniProtKB-KW"/>
</dbReference>
<dbReference type="GO" id="GO:0062213">
    <property type="term" value="F:peroxynitrite isomerase activity"/>
    <property type="evidence" value="ECO:0007669"/>
    <property type="project" value="UniProtKB-UniRule"/>
</dbReference>
<dbReference type="CDD" id="cd07828">
    <property type="entry name" value="lipocalin_heme-bd-THAP4-like"/>
    <property type="match status" value="1"/>
</dbReference>
<dbReference type="Gene3D" id="2.40.128.20">
    <property type="match status" value="1"/>
</dbReference>
<dbReference type="HAMAP" id="MF_01297">
    <property type="entry name" value="nitrobindin"/>
    <property type="match status" value="1"/>
</dbReference>
<dbReference type="InterPro" id="IPR012674">
    <property type="entry name" value="Calycin"/>
</dbReference>
<dbReference type="InterPro" id="IPR022939">
    <property type="entry name" value="Nb(III)_bact/plant"/>
</dbReference>
<dbReference type="InterPro" id="IPR045165">
    <property type="entry name" value="Nitrobindin"/>
</dbReference>
<dbReference type="InterPro" id="IPR014878">
    <property type="entry name" value="THAP4-like_heme-bd"/>
</dbReference>
<dbReference type="PANTHER" id="PTHR15854:SF4">
    <property type="entry name" value="PEROXYNITRITE ISOMERASE THAP4"/>
    <property type="match status" value="1"/>
</dbReference>
<dbReference type="PANTHER" id="PTHR15854">
    <property type="entry name" value="THAP4 PROTEIN"/>
    <property type="match status" value="1"/>
</dbReference>
<dbReference type="Pfam" id="PF08768">
    <property type="entry name" value="THAP4_heme-bd"/>
    <property type="match status" value="1"/>
</dbReference>
<dbReference type="SUPFAM" id="SSF50814">
    <property type="entry name" value="Lipocalins"/>
    <property type="match status" value="1"/>
</dbReference>
<gene>
    <name type="ordered locus">RSal33209_0970</name>
</gene>